<protein>
    <recommendedName>
        <fullName evidence="1">N-methyl-L-tryptophan oxidase</fullName>
        <shortName evidence="1">MTOX</shortName>
        <ecNumber evidence="1">1.5.3.-</ecNumber>
    </recommendedName>
</protein>
<evidence type="ECO:0000255" key="1">
    <source>
        <dbReference type="HAMAP-Rule" id="MF_00515"/>
    </source>
</evidence>
<reference key="1">
    <citation type="journal article" date="2006" name="J. Bacteriol.">
        <title>Complete genome sequence of Yersinia pestis strains Antiqua and Nepal516: evidence of gene reduction in an emerging pathogen.</title>
        <authorList>
            <person name="Chain P.S.G."/>
            <person name="Hu P."/>
            <person name="Malfatti S.A."/>
            <person name="Radnedge L."/>
            <person name="Larimer F."/>
            <person name="Vergez L.M."/>
            <person name="Worsham P."/>
            <person name="Chu M.C."/>
            <person name="Andersen G.L."/>
        </authorList>
    </citation>
    <scope>NUCLEOTIDE SEQUENCE [LARGE SCALE GENOMIC DNA]</scope>
    <source>
        <strain>Nepal516</strain>
    </source>
</reference>
<reference key="2">
    <citation type="submission" date="2009-04" db="EMBL/GenBank/DDBJ databases">
        <title>Yersinia pestis Nepal516A whole genome shotgun sequencing project.</title>
        <authorList>
            <person name="Plunkett G. III"/>
            <person name="Anderson B.D."/>
            <person name="Baumler D.J."/>
            <person name="Burland V."/>
            <person name="Cabot E.L."/>
            <person name="Glasner J.D."/>
            <person name="Mau B."/>
            <person name="Neeno-Eckwall E."/>
            <person name="Perna N.T."/>
            <person name="Munk A.C."/>
            <person name="Tapia R."/>
            <person name="Green L.D."/>
            <person name="Rogers Y.C."/>
            <person name="Detter J.C."/>
            <person name="Bruce D.C."/>
            <person name="Brettin T.S."/>
        </authorList>
    </citation>
    <scope>NUCLEOTIDE SEQUENCE [LARGE SCALE GENOMIC DNA]</scope>
    <source>
        <strain>Nepal516</strain>
    </source>
</reference>
<accession>Q1CI06</accession>
<accession>C4GU13</accession>
<feature type="chain" id="PRO_0000259027" description="N-methyl-L-tryptophan oxidase">
    <location>
        <begin position="1"/>
        <end position="371"/>
    </location>
</feature>
<feature type="binding site" evidence="1">
    <location>
        <begin position="4"/>
        <end position="34"/>
    </location>
    <ligand>
        <name>FAD</name>
        <dbReference type="ChEBI" id="CHEBI:57692"/>
    </ligand>
</feature>
<feature type="modified residue" description="S-8alpha-FAD cysteine" evidence="1">
    <location>
        <position position="307"/>
    </location>
</feature>
<proteinExistence type="inferred from homology"/>
<organism>
    <name type="scientific">Yersinia pestis bv. Antiqua (strain Nepal516)</name>
    <dbReference type="NCBI Taxonomy" id="377628"/>
    <lineage>
        <taxon>Bacteria</taxon>
        <taxon>Pseudomonadati</taxon>
        <taxon>Pseudomonadota</taxon>
        <taxon>Gammaproteobacteria</taxon>
        <taxon>Enterobacterales</taxon>
        <taxon>Yersiniaceae</taxon>
        <taxon>Yersinia</taxon>
    </lineage>
</organism>
<keyword id="KW-0274">FAD</keyword>
<keyword id="KW-0285">Flavoprotein</keyword>
<keyword id="KW-0560">Oxidoreductase</keyword>
<name>MTOX_YERPN</name>
<comment type="function">
    <text evidence="1">Catalyzes the oxidative demethylation of N-methyl-L-tryptophan.</text>
</comment>
<comment type="catalytic activity">
    <reaction evidence="1">
        <text>N(alpha)-methyl-L-tryptophan + O2 + H2O = L-tryptophan + formaldehyde + H2O2</text>
        <dbReference type="Rhea" id="RHEA:28006"/>
        <dbReference type="ChEBI" id="CHEBI:15377"/>
        <dbReference type="ChEBI" id="CHEBI:15379"/>
        <dbReference type="ChEBI" id="CHEBI:16240"/>
        <dbReference type="ChEBI" id="CHEBI:16842"/>
        <dbReference type="ChEBI" id="CHEBI:57283"/>
        <dbReference type="ChEBI" id="CHEBI:57912"/>
    </reaction>
</comment>
<comment type="cofactor">
    <cofactor evidence="1">
        <name>FAD</name>
        <dbReference type="ChEBI" id="CHEBI:57692"/>
    </cofactor>
    <text evidence="1">Binds 1 FAD per subunit.</text>
</comment>
<comment type="subunit">
    <text evidence="1">Monomer.</text>
</comment>
<comment type="similarity">
    <text evidence="1">Belongs to the MSOX/MTOX family. MTOX subfamily.</text>
</comment>
<sequence length="371" mass="40467">MDYDLIVIGSGSVGSAAGYYASQAGLNVLMIDSAMPPHQAGSHHGETRIMRHAYGEGEKYVPLVLRAQALWDQLAAQTGEKLFQACGVINLGPDNSTFLQNVQRSAQQYDLPVETLNSTQIREKWPVFTVPDNYIAVFEPQSGYLRSELAVKTLIKAVTEAGCGILFNCPVTAIESHQAGVDVVTIDGTYSATKVVVTAGTWVKELLPTLPVTPVRKVFSWHQADGRYSEANHFPAFTVEMPDNILYYGFPAQNDALKLGKHHGGQLIESAAQRKPFGRYAEDGTEVFSFLRHFLPGVGVCLRGEACSYDMSPDEDFIIDTLPEDERVMVVSGLSGHGFKFATALGEVAALFAQDKPSPIDISAFSLARFR</sequence>
<gene>
    <name evidence="1" type="primary">solA</name>
    <name type="ordered locus">YPN_2045</name>
    <name type="ORF">YP516_2279</name>
</gene>
<dbReference type="EC" id="1.5.3.-" evidence="1"/>
<dbReference type="EMBL" id="CP000305">
    <property type="protein sequence ID" value="ABG18374.1"/>
    <property type="molecule type" value="Genomic_DNA"/>
</dbReference>
<dbReference type="EMBL" id="ACNQ01000013">
    <property type="protein sequence ID" value="EEO76082.1"/>
    <property type="molecule type" value="Genomic_DNA"/>
</dbReference>
<dbReference type="RefSeq" id="WP_002211850.1">
    <property type="nucleotide sequence ID" value="NZ_ACNQ01000013.1"/>
</dbReference>
<dbReference type="SMR" id="Q1CI06"/>
<dbReference type="GeneID" id="57976231"/>
<dbReference type="KEGG" id="ypn:YPN_2045"/>
<dbReference type="HOGENOM" id="CLU_007884_2_1_6"/>
<dbReference type="Proteomes" id="UP000008936">
    <property type="component" value="Chromosome"/>
</dbReference>
<dbReference type="GO" id="GO:0005829">
    <property type="term" value="C:cytosol"/>
    <property type="evidence" value="ECO:0007669"/>
    <property type="project" value="TreeGrafter"/>
</dbReference>
<dbReference type="GO" id="GO:0050660">
    <property type="term" value="F:flavin adenine dinucleotide binding"/>
    <property type="evidence" value="ECO:0007669"/>
    <property type="project" value="InterPro"/>
</dbReference>
<dbReference type="GO" id="GO:0050131">
    <property type="term" value="F:N-methyl-L-amino-acid oxidase activity"/>
    <property type="evidence" value="ECO:0007669"/>
    <property type="project" value="InterPro"/>
</dbReference>
<dbReference type="GO" id="GO:0008115">
    <property type="term" value="F:sarcosine oxidase activity"/>
    <property type="evidence" value="ECO:0007669"/>
    <property type="project" value="TreeGrafter"/>
</dbReference>
<dbReference type="Gene3D" id="3.30.9.10">
    <property type="entry name" value="D-Amino Acid Oxidase, subunit A, domain 2"/>
    <property type="match status" value="1"/>
</dbReference>
<dbReference type="Gene3D" id="3.50.50.60">
    <property type="entry name" value="FAD/NAD(P)-binding domain"/>
    <property type="match status" value="1"/>
</dbReference>
<dbReference type="HAMAP" id="MF_00515">
    <property type="entry name" value="MTOX"/>
    <property type="match status" value="1"/>
</dbReference>
<dbReference type="InterPro" id="IPR006076">
    <property type="entry name" value="FAD-dep_OxRdtase"/>
</dbReference>
<dbReference type="InterPro" id="IPR036188">
    <property type="entry name" value="FAD/NAD-bd_sf"/>
</dbReference>
<dbReference type="InterPro" id="IPR023493">
    <property type="entry name" value="Me_Trp_Oxase_MTOX"/>
</dbReference>
<dbReference type="InterPro" id="IPR045170">
    <property type="entry name" value="MTOX"/>
</dbReference>
<dbReference type="NCBIfam" id="NF008425">
    <property type="entry name" value="PRK11259.1"/>
    <property type="match status" value="1"/>
</dbReference>
<dbReference type="PANTHER" id="PTHR10961:SF7">
    <property type="entry name" value="FAD DEPENDENT OXIDOREDUCTASE DOMAIN-CONTAINING PROTEIN"/>
    <property type="match status" value="1"/>
</dbReference>
<dbReference type="PANTHER" id="PTHR10961">
    <property type="entry name" value="PEROXISOMAL SARCOSINE OXIDASE"/>
    <property type="match status" value="1"/>
</dbReference>
<dbReference type="Pfam" id="PF01266">
    <property type="entry name" value="DAO"/>
    <property type="match status" value="1"/>
</dbReference>
<dbReference type="SUPFAM" id="SSF54373">
    <property type="entry name" value="FAD-linked reductases, C-terminal domain"/>
    <property type="match status" value="1"/>
</dbReference>
<dbReference type="SUPFAM" id="SSF51905">
    <property type="entry name" value="FAD/NAD(P)-binding domain"/>
    <property type="match status" value="1"/>
</dbReference>